<dbReference type="EC" id="2.1.3.-" evidence="1"/>
<dbReference type="EMBL" id="CP001321">
    <property type="protein sequence ID" value="ACL31865.1"/>
    <property type="status" value="ALT_INIT"/>
    <property type="molecule type" value="Genomic_DNA"/>
</dbReference>
<dbReference type="RefSeq" id="WP_041603098.1">
    <property type="nucleotide sequence ID" value="NC_011852.1"/>
</dbReference>
<dbReference type="SMR" id="B8F3G3"/>
<dbReference type="STRING" id="557723.HAPS_0169"/>
<dbReference type="KEGG" id="hap:HAPS_0169"/>
<dbReference type="PATRIC" id="fig|557723.8.peg.177"/>
<dbReference type="HOGENOM" id="CLU_078475_0_0_6"/>
<dbReference type="Proteomes" id="UP000006743">
    <property type="component" value="Chromosome"/>
</dbReference>
<dbReference type="GO" id="GO:0016743">
    <property type="term" value="F:carboxyl- or carbamoyltransferase activity"/>
    <property type="evidence" value="ECO:0007669"/>
    <property type="project" value="UniProtKB-UniRule"/>
</dbReference>
<dbReference type="GO" id="GO:1904047">
    <property type="term" value="F:S-adenosyl-L-methionine binding"/>
    <property type="evidence" value="ECO:0007669"/>
    <property type="project" value="UniProtKB-UniRule"/>
</dbReference>
<dbReference type="GO" id="GO:0002098">
    <property type="term" value="P:tRNA wobble uridine modification"/>
    <property type="evidence" value="ECO:0007669"/>
    <property type="project" value="InterPro"/>
</dbReference>
<dbReference type="CDD" id="cd02440">
    <property type="entry name" value="AdoMet_MTases"/>
    <property type="match status" value="1"/>
</dbReference>
<dbReference type="Gene3D" id="3.40.50.150">
    <property type="entry name" value="Vaccinia Virus protein VP39"/>
    <property type="match status" value="1"/>
</dbReference>
<dbReference type="HAMAP" id="MF_01589">
    <property type="entry name" value="Cx_SAM_synthase"/>
    <property type="match status" value="1"/>
</dbReference>
<dbReference type="InterPro" id="IPR005271">
    <property type="entry name" value="CmoA"/>
</dbReference>
<dbReference type="InterPro" id="IPR041698">
    <property type="entry name" value="Methyltransf_25"/>
</dbReference>
<dbReference type="InterPro" id="IPR029063">
    <property type="entry name" value="SAM-dependent_MTases_sf"/>
</dbReference>
<dbReference type="NCBIfam" id="TIGR00740">
    <property type="entry name" value="carboxy-S-adenosyl-L-methionine synthase CmoA"/>
    <property type="match status" value="1"/>
</dbReference>
<dbReference type="NCBIfam" id="NF011995">
    <property type="entry name" value="PRK15451.1"/>
    <property type="match status" value="1"/>
</dbReference>
<dbReference type="PANTHER" id="PTHR43861:SF2">
    <property type="entry name" value="CARBOXY-S-ADENOSYL-L-METHIONINE SYNTHASE"/>
    <property type="match status" value="1"/>
</dbReference>
<dbReference type="PANTHER" id="PTHR43861">
    <property type="entry name" value="TRANS-ACONITATE 2-METHYLTRANSFERASE-RELATED"/>
    <property type="match status" value="1"/>
</dbReference>
<dbReference type="Pfam" id="PF13649">
    <property type="entry name" value="Methyltransf_25"/>
    <property type="match status" value="1"/>
</dbReference>
<dbReference type="PIRSF" id="PIRSF006325">
    <property type="entry name" value="MeTrfase_bac"/>
    <property type="match status" value="1"/>
</dbReference>
<dbReference type="SUPFAM" id="SSF53335">
    <property type="entry name" value="S-adenosyl-L-methionine-dependent methyltransferases"/>
    <property type="match status" value="1"/>
</dbReference>
<comment type="function">
    <text evidence="1">Catalyzes the conversion of S-adenosyl-L-methionine (SAM) to carboxy-S-adenosyl-L-methionine (Cx-SAM).</text>
</comment>
<comment type="catalytic activity">
    <reaction evidence="1">
        <text>prephenate + S-adenosyl-L-methionine = carboxy-S-adenosyl-L-methionine + 3-phenylpyruvate + H2O</text>
        <dbReference type="Rhea" id="RHEA:51692"/>
        <dbReference type="ChEBI" id="CHEBI:15377"/>
        <dbReference type="ChEBI" id="CHEBI:18005"/>
        <dbReference type="ChEBI" id="CHEBI:29934"/>
        <dbReference type="ChEBI" id="CHEBI:59789"/>
        <dbReference type="ChEBI" id="CHEBI:134278"/>
    </reaction>
</comment>
<comment type="subunit">
    <text evidence="1">Homodimer.</text>
</comment>
<comment type="similarity">
    <text evidence="1">Belongs to the class I-like SAM-binding methyltransferase superfamily. Cx-SAM synthase family.</text>
</comment>
<comment type="sequence caution" evidence="2">
    <conflict type="erroneous initiation">
        <sequence resource="EMBL-CDS" id="ACL31865"/>
    </conflict>
</comment>
<proteinExistence type="inferred from homology"/>
<sequence>MSKDTLFSAPIEKLGDFIFDESVAEVFPDMIQRSVPGYSNIITAIGMLASRFVTDQSNVYDLGCSRGAGILSIRRNVEKAGVRIIGVDNSEPMVERCRRHLEAYHSDIPVEILCDDIRHVEIKNASMVVLNFTLQFLPREDRLALLRKIYQGLNPNGVLVLSEKFTFEDNTINELLIDLHHTFKRANGYSELEVSQKRTALENVMRTDSIDTHKARLKEAGFSQVDLWFQCFNFGSMITIK</sequence>
<organism>
    <name type="scientific">Glaesserella parasuis serovar 5 (strain SH0165)</name>
    <name type="common">Haemophilus parasuis</name>
    <dbReference type="NCBI Taxonomy" id="557723"/>
    <lineage>
        <taxon>Bacteria</taxon>
        <taxon>Pseudomonadati</taxon>
        <taxon>Pseudomonadota</taxon>
        <taxon>Gammaproteobacteria</taxon>
        <taxon>Pasteurellales</taxon>
        <taxon>Pasteurellaceae</taxon>
        <taxon>Glaesserella</taxon>
    </lineage>
</organism>
<gene>
    <name evidence="1" type="primary">cmoA</name>
    <name type="ordered locus">HAPS_0169</name>
</gene>
<keyword id="KW-1185">Reference proteome</keyword>
<keyword id="KW-0949">S-adenosyl-L-methionine</keyword>
<keyword id="KW-0808">Transferase</keyword>
<reference key="1">
    <citation type="journal article" date="2009" name="J. Bacteriol.">
        <title>Complete genome sequence of Haemophilus parasuis SH0165.</title>
        <authorList>
            <person name="Yue M."/>
            <person name="Yang F."/>
            <person name="Yang J."/>
            <person name="Bei W."/>
            <person name="Cai X."/>
            <person name="Chen L."/>
            <person name="Dong J."/>
            <person name="Zhou R."/>
            <person name="Jin M."/>
            <person name="Jin Q."/>
            <person name="Chen H."/>
        </authorList>
    </citation>
    <scope>NUCLEOTIDE SEQUENCE [LARGE SCALE GENOMIC DNA]</scope>
    <source>
        <strain>SH0165</strain>
    </source>
</reference>
<protein>
    <recommendedName>
        <fullName evidence="1">Carboxy-S-adenosyl-L-methionine synthase</fullName>
        <shortName evidence="1">Cx-SAM synthase</shortName>
        <ecNumber evidence="1">2.1.3.-</ecNumber>
    </recommendedName>
</protein>
<accession>B8F3G3</accession>
<evidence type="ECO:0000255" key="1">
    <source>
        <dbReference type="HAMAP-Rule" id="MF_01589"/>
    </source>
</evidence>
<evidence type="ECO:0000305" key="2"/>
<name>CMOA_GLAP5</name>
<feature type="chain" id="PRO_0000381959" description="Carboxy-S-adenosyl-L-methionine synthase">
    <location>
        <begin position="1"/>
        <end position="241"/>
    </location>
</feature>
<feature type="binding site" evidence="1">
    <location>
        <position position="38"/>
    </location>
    <ligand>
        <name>S-adenosyl-L-methionine</name>
        <dbReference type="ChEBI" id="CHEBI:59789"/>
    </ligand>
</feature>
<feature type="binding site" evidence="1">
    <location>
        <begin position="63"/>
        <end position="65"/>
    </location>
    <ligand>
        <name>S-adenosyl-L-methionine</name>
        <dbReference type="ChEBI" id="CHEBI:59789"/>
    </ligand>
</feature>
<feature type="binding site" evidence="1">
    <location>
        <begin position="88"/>
        <end position="89"/>
    </location>
    <ligand>
        <name>S-adenosyl-L-methionine</name>
        <dbReference type="ChEBI" id="CHEBI:59789"/>
    </ligand>
</feature>
<feature type="binding site" evidence="1">
    <location>
        <begin position="116"/>
        <end position="117"/>
    </location>
    <ligand>
        <name>S-adenosyl-L-methionine</name>
        <dbReference type="ChEBI" id="CHEBI:59789"/>
    </ligand>
</feature>
<feature type="binding site" evidence="1">
    <location>
        <position position="131"/>
    </location>
    <ligand>
        <name>S-adenosyl-L-methionine</name>
        <dbReference type="ChEBI" id="CHEBI:59789"/>
    </ligand>
</feature>
<feature type="binding site" evidence="1">
    <location>
        <position position="198"/>
    </location>
    <ligand>
        <name>S-adenosyl-L-methionine</name>
        <dbReference type="ChEBI" id="CHEBI:59789"/>
    </ligand>
</feature>